<evidence type="ECO:0000255" key="1">
    <source>
        <dbReference type="HAMAP-Rule" id="MF_02115"/>
    </source>
</evidence>
<feature type="chain" id="PRO_0000406251" description="FAD synthase">
    <location>
        <begin position="1"/>
        <end position="139"/>
    </location>
</feature>
<feature type="binding site" evidence="1">
    <location>
        <begin position="9"/>
        <end position="10"/>
    </location>
    <ligand>
        <name>ATP</name>
        <dbReference type="ChEBI" id="CHEBI:30616"/>
    </ligand>
</feature>
<feature type="binding site" evidence="1">
    <location>
        <begin position="14"/>
        <end position="17"/>
    </location>
    <ligand>
        <name>ATP</name>
        <dbReference type="ChEBI" id="CHEBI:30616"/>
    </ligand>
</feature>
<feature type="binding site" evidence="1">
    <location>
        <position position="92"/>
    </location>
    <ligand>
        <name>ATP</name>
        <dbReference type="ChEBI" id="CHEBI:30616"/>
    </ligand>
</feature>
<protein>
    <recommendedName>
        <fullName evidence="1">FAD synthase</fullName>
        <ecNumber evidence="1">2.7.7.2</ecNumber>
    </recommendedName>
    <alternativeName>
        <fullName evidence="1">FMN adenylyltransferase</fullName>
    </alternativeName>
    <alternativeName>
        <fullName evidence="1">Flavin adenine dinucleotide synthase</fullName>
    </alternativeName>
</protein>
<keyword id="KW-0067">ATP-binding</keyword>
<keyword id="KW-0274">FAD</keyword>
<keyword id="KW-0285">Flavoprotein</keyword>
<keyword id="KW-0288">FMN</keyword>
<keyword id="KW-0547">Nucleotide-binding</keyword>
<keyword id="KW-0548">Nucleotidyltransferase</keyword>
<keyword id="KW-0808">Transferase</keyword>
<gene>
    <name evidence="1" type="primary">ribL</name>
    <name type="ordered locus">MCP_1752</name>
</gene>
<comment type="function">
    <text evidence="1">Catalyzes the transfer of the AMP portion of ATP to flavin mononucleotide (FMN) to produce flavin adenine dinucleotide (FAD) coenzyme.</text>
</comment>
<comment type="catalytic activity">
    <reaction evidence="1">
        <text>FMN + ATP + H(+) = FAD + diphosphate</text>
        <dbReference type="Rhea" id="RHEA:17237"/>
        <dbReference type="ChEBI" id="CHEBI:15378"/>
        <dbReference type="ChEBI" id="CHEBI:30616"/>
        <dbReference type="ChEBI" id="CHEBI:33019"/>
        <dbReference type="ChEBI" id="CHEBI:57692"/>
        <dbReference type="ChEBI" id="CHEBI:58210"/>
        <dbReference type="EC" id="2.7.7.2"/>
    </reaction>
</comment>
<comment type="cofactor">
    <cofactor evidence="1">
        <name>a divalent metal cation</name>
        <dbReference type="ChEBI" id="CHEBI:60240"/>
    </cofactor>
</comment>
<comment type="pathway">
    <text evidence="1">Cofactor biosynthesis; FAD biosynthesis; FAD from FMN: step 1/1.</text>
</comment>
<comment type="subunit">
    <text evidence="1">Homodimer.</text>
</comment>
<comment type="similarity">
    <text evidence="1">Belongs to the archaeal FAD synthase family.</text>
</comment>
<name>RIBL_METPS</name>
<reference key="1">
    <citation type="journal article" date="2011" name="PLoS ONE">
        <title>Genome sequence of a mesophilic hydrogenotrophic methanogen Methanocella paludicola, the first cultivated representative of the order Methanocellales.</title>
        <authorList>
            <person name="Sakai S."/>
            <person name="Takaki Y."/>
            <person name="Shimamura S."/>
            <person name="Sekine M."/>
            <person name="Tajima T."/>
            <person name="Kosugi H."/>
            <person name="Ichikawa N."/>
            <person name="Tasumi E."/>
            <person name="Hiraki A.T."/>
            <person name="Shimizu A."/>
            <person name="Kato Y."/>
            <person name="Nishiko R."/>
            <person name="Mori K."/>
            <person name="Fujita N."/>
            <person name="Imachi H."/>
            <person name="Takai K."/>
        </authorList>
    </citation>
    <scope>NUCLEOTIDE SEQUENCE [LARGE SCALE GENOMIC DNA]</scope>
    <source>
        <strain>DSM 17711 / JCM 13418 / NBRC 101707 / SANAE</strain>
    </source>
</reference>
<accession>D1YZF2</accession>
<organism>
    <name type="scientific">Methanocella paludicola (strain DSM 17711 / JCM 13418 / NBRC 101707 / SANAE)</name>
    <dbReference type="NCBI Taxonomy" id="304371"/>
    <lineage>
        <taxon>Archaea</taxon>
        <taxon>Methanobacteriati</taxon>
        <taxon>Methanobacteriota</taxon>
        <taxon>Stenosarchaea group</taxon>
        <taxon>Methanomicrobia</taxon>
        <taxon>Methanocellales</taxon>
        <taxon>Methanocellaceae</taxon>
        <taxon>Methanocella</taxon>
    </lineage>
</organism>
<proteinExistence type="inferred from homology"/>
<dbReference type="EC" id="2.7.7.2" evidence="1"/>
<dbReference type="EMBL" id="AP011532">
    <property type="protein sequence ID" value="BAI61824.1"/>
    <property type="molecule type" value="Genomic_DNA"/>
</dbReference>
<dbReference type="RefSeq" id="WP_012900502.1">
    <property type="nucleotide sequence ID" value="NC_013665.1"/>
</dbReference>
<dbReference type="SMR" id="D1YZF2"/>
<dbReference type="FunCoup" id="D1YZF2">
    <property type="interactions" value="11"/>
</dbReference>
<dbReference type="STRING" id="304371.MCP_1752"/>
<dbReference type="GeneID" id="8681649"/>
<dbReference type="KEGG" id="mpd:MCP_1752"/>
<dbReference type="PATRIC" id="fig|304371.9.peg.1790"/>
<dbReference type="eggNOG" id="arCOG01222">
    <property type="taxonomic scope" value="Archaea"/>
</dbReference>
<dbReference type="InParanoid" id="D1YZF2"/>
<dbReference type="OrthoDB" id="1912at2157"/>
<dbReference type="UniPathway" id="UPA00277">
    <property type="reaction ID" value="UER00407"/>
</dbReference>
<dbReference type="Proteomes" id="UP000001882">
    <property type="component" value="Chromosome"/>
</dbReference>
<dbReference type="GO" id="GO:0005524">
    <property type="term" value="F:ATP binding"/>
    <property type="evidence" value="ECO:0007669"/>
    <property type="project" value="UniProtKB-UniRule"/>
</dbReference>
<dbReference type="GO" id="GO:0003919">
    <property type="term" value="F:FMN adenylyltransferase activity"/>
    <property type="evidence" value="ECO:0007669"/>
    <property type="project" value="UniProtKB-UniRule"/>
</dbReference>
<dbReference type="GO" id="GO:0006747">
    <property type="term" value="P:FAD biosynthetic process"/>
    <property type="evidence" value="ECO:0007669"/>
    <property type="project" value="UniProtKB-UniRule"/>
</dbReference>
<dbReference type="GO" id="GO:0046444">
    <property type="term" value="P:FMN metabolic process"/>
    <property type="evidence" value="ECO:0007669"/>
    <property type="project" value="UniProtKB-UniRule"/>
</dbReference>
<dbReference type="Gene3D" id="3.40.50.620">
    <property type="entry name" value="HUPs"/>
    <property type="match status" value="1"/>
</dbReference>
<dbReference type="HAMAP" id="MF_02115">
    <property type="entry name" value="FAD_synth_arch"/>
    <property type="match status" value="1"/>
</dbReference>
<dbReference type="InterPro" id="IPR050385">
    <property type="entry name" value="Archaeal_FAD_synthase"/>
</dbReference>
<dbReference type="InterPro" id="IPR004821">
    <property type="entry name" value="Cyt_trans-like"/>
</dbReference>
<dbReference type="InterPro" id="IPR024902">
    <property type="entry name" value="FAD_synth_RibL"/>
</dbReference>
<dbReference type="InterPro" id="IPR014729">
    <property type="entry name" value="Rossmann-like_a/b/a_fold"/>
</dbReference>
<dbReference type="NCBIfam" id="TIGR00125">
    <property type="entry name" value="cyt_tran_rel"/>
    <property type="match status" value="1"/>
</dbReference>
<dbReference type="PANTHER" id="PTHR43793">
    <property type="entry name" value="FAD SYNTHASE"/>
    <property type="match status" value="1"/>
</dbReference>
<dbReference type="PANTHER" id="PTHR43793:SF1">
    <property type="entry name" value="FAD SYNTHASE"/>
    <property type="match status" value="1"/>
</dbReference>
<dbReference type="Pfam" id="PF01467">
    <property type="entry name" value="CTP_transf_like"/>
    <property type="match status" value="1"/>
</dbReference>
<dbReference type="SUPFAM" id="SSF52374">
    <property type="entry name" value="Nucleotidylyl transferase"/>
    <property type="match status" value="1"/>
</dbReference>
<sequence length="139" mass="15924">MTRVVATGTFDILHPGHVLYLSEAGKLGDELYVIVARDSTIKHKRKPLVPENQRLFMVRALKCVDHAMLGSEDDMFKPIREIDPDIITIGFNQHWDEEALQRQLIERGLKAKVVRITKCDTAPYASSRHIREKIKESDC</sequence>